<proteinExistence type="inferred from homology"/>
<evidence type="ECO:0000255" key="1">
    <source>
        <dbReference type="HAMAP-Rule" id="MF_01712"/>
    </source>
</evidence>
<accession>Q83J77</accession>
<accession>Q7BYV9</accession>
<sequence length="268" mass="29556">MTLLNVCGLSHHYAHGGFSGKHQHQAVLNNVSLTLKSGETVALLGRSGCGKSTLARLLVGLESPSQGNISWHGESLAKLNRAQRKAFRRDIQMVFQDSISAVNPRKTVREILREPMRHLLSLKKSEQLARASEMLKAVDLDDSVLDKRPPQLSGGQLQLVCLARALAVEPKLLILDEAVSNLDLVLQAGVIRLLKKLQQQFGTACLFITHDLRLVERFCQRVMVMDNGQIAETQAVGDKLTFSSDAGRVLQNAVLPAFPVRRRTSEKV</sequence>
<comment type="function">
    <text evidence="1">Part of the ABC transporter complex NikABCDE involved in nickel import. Responsible for energy coupling to the transport system.</text>
</comment>
<comment type="catalytic activity">
    <reaction evidence="1">
        <text>Ni(2+)(out) + ATP + H2O = Ni(2+)(in) + ADP + phosphate + H(+)</text>
        <dbReference type="Rhea" id="RHEA:15557"/>
        <dbReference type="ChEBI" id="CHEBI:15377"/>
        <dbReference type="ChEBI" id="CHEBI:15378"/>
        <dbReference type="ChEBI" id="CHEBI:30616"/>
        <dbReference type="ChEBI" id="CHEBI:43474"/>
        <dbReference type="ChEBI" id="CHEBI:49786"/>
        <dbReference type="ChEBI" id="CHEBI:456216"/>
        <dbReference type="EC" id="7.2.2.11"/>
    </reaction>
</comment>
<comment type="subunit">
    <text evidence="1">The complex is composed of two ATP-binding proteins (NikD and NikE), two transmembrane proteins (NikB and NikC) and a solute-binding protein (NikA).</text>
</comment>
<comment type="subcellular location">
    <subcellularLocation>
        <location evidence="1">Cell inner membrane</location>
        <topology evidence="1">Peripheral membrane protein</topology>
    </subcellularLocation>
</comment>
<comment type="similarity">
    <text evidence="1">Belongs to the ABC transporter superfamily. Nickel importer (TC 3.A.1.5.3) family.</text>
</comment>
<keyword id="KW-0067">ATP-binding</keyword>
<keyword id="KW-0997">Cell inner membrane</keyword>
<keyword id="KW-1003">Cell membrane</keyword>
<keyword id="KW-0406">Ion transport</keyword>
<keyword id="KW-0472">Membrane</keyword>
<keyword id="KW-0533">Nickel</keyword>
<keyword id="KW-0921">Nickel transport</keyword>
<keyword id="KW-0547">Nucleotide-binding</keyword>
<keyword id="KW-1185">Reference proteome</keyword>
<keyword id="KW-1278">Translocase</keyword>
<keyword id="KW-0813">Transport</keyword>
<gene>
    <name evidence="1" type="primary">nikE</name>
    <name type="ordered locus">SF3498</name>
    <name type="ordered locus">S4265</name>
</gene>
<organism>
    <name type="scientific">Shigella flexneri</name>
    <dbReference type="NCBI Taxonomy" id="623"/>
    <lineage>
        <taxon>Bacteria</taxon>
        <taxon>Pseudomonadati</taxon>
        <taxon>Pseudomonadota</taxon>
        <taxon>Gammaproteobacteria</taxon>
        <taxon>Enterobacterales</taxon>
        <taxon>Enterobacteriaceae</taxon>
        <taxon>Shigella</taxon>
    </lineage>
</organism>
<name>NIKE_SHIFL</name>
<reference key="1">
    <citation type="journal article" date="2002" name="Nucleic Acids Res.">
        <title>Genome sequence of Shigella flexneri 2a: insights into pathogenicity through comparison with genomes of Escherichia coli K12 and O157.</title>
        <authorList>
            <person name="Jin Q."/>
            <person name="Yuan Z."/>
            <person name="Xu J."/>
            <person name="Wang Y."/>
            <person name="Shen Y."/>
            <person name="Lu W."/>
            <person name="Wang J."/>
            <person name="Liu H."/>
            <person name="Yang J."/>
            <person name="Yang F."/>
            <person name="Zhang X."/>
            <person name="Zhang J."/>
            <person name="Yang G."/>
            <person name="Wu H."/>
            <person name="Qu D."/>
            <person name="Dong J."/>
            <person name="Sun L."/>
            <person name="Xue Y."/>
            <person name="Zhao A."/>
            <person name="Gao Y."/>
            <person name="Zhu J."/>
            <person name="Kan B."/>
            <person name="Ding K."/>
            <person name="Chen S."/>
            <person name="Cheng H."/>
            <person name="Yao Z."/>
            <person name="He B."/>
            <person name="Chen R."/>
            <person name="Ma D."/>
            <person name="Qiang B."/>
            <person name="Wen Y."/>
            <person name="Hou Y."/>
            <person name="Yu J."/>
        </authorList>
    </citation>
    <scope>NUCLEOTIDE SEQUENCE [LARGE SCALE GENOMIC DNA]</scope>
    <source>
        <strain>301 / Serotype 2a</strain>
    </source>
</reference>
<reference key="2">
    <citation type="journal article" date="2003" name="Infect. Immun.">
        <title>Complete genome sequence and comparative genomics of Shigella flexneri serotype 2a strain 2457T.</title>
        <authorList>
            <person name="Wei J."/>
            <person name="Goldberg M.B."/>
            <person name="Burland V."/>
            <person name="Venkatesan M.M."/>
            <person name="Deng W."/>
            <person name="Fournier G."/>
            <person name="Mayhew G.F."/>
            <person name="Plunkett G. III"/>
            <person name="Rose D.J."/>
            <person name="Darling A."/>
            <person name="Mau B."/>
            <person name="Perna N.T."/>
            <person name="Payne S.M."/>
            <person name="Runyen-Janecky L.J."/>
            <person name="Zhou S."/>
            <person name="Schwartz D.C."/>
            <person name="Blattner F.R."/>
        </authorList>
    </citation>
    <scope>NUCLEOTIDE SEQUENCE [LARGE SCALE GENOMIC DNA]</scope>
    <source>
        <strain>ATCC 700930 / 2457T / Serotype 2a</strain>
    </source>
</reference>
<feature type="chain" id="PRO_0000092631" description="Nickel import ATP-binding protein NikE">
    <location>
        <begin position="1"/>
        <end position="268"/>
    </location>
</feature>
<feature type="domain" description="ABC transporter" evidence="1">
    <location>
        <begin position="4"/>
        <end position="252"/>
    </location>
</feature>
<feature type="binding site" evidence="1">
    <location>
        <begin position="45"/>
        <end position="52"/>
    </location>
    <ligand>
        <name>ATP</name>
        <dbReference type="ChEBI" id="CHEBI:30616"/>
    </ligand>
</feature>
<protein>
    <recommendedName>
        <fullName evidence="1">Nickel import ATP-binding protein NikE</fullName>
        <ecNumber evidence="1">7.2.2.11</ecNumber>
    </recommendedName>
</protein>
<dbReference type="EC" id="7.2.2.11" evidence="1"/>
<dbReference type="EMBL" id="AE005674">
    <property type="protein sequence ID" value="AAN44957.1"/>
    <property type="molecule type" value="Genomic_DNA"/>
</dbReference>
<dbReference type="EMBL" id="AE014073">
    <property type="protein sequence ID" value="AAP19225.1"/>
    <property type="molecule type" value="Genomic_DNA"/>
</dbReference>
<dbReference type="RefSeq" id="NP_709250.1">
    <property type="nucleotide sequence ID" value="NC_004337.2"/>
</dbReference>
<dbReference type="RefSeq" id="WP_000173660.1">
    <property type="nucleotide sequence ID" value="NZ_WPGW01000010.1"/>
</dbReference>
<dbReference type="SMR" id="Q83J77"/>
<dbReference type="STRING" id="198214.SF3498"/>
<dbReference type="PaxDb" id="198214-SF3498"/>
<dbReference type="GeneID" id="1024617"/>
<dbReference type="KEGG" id="sfl:SF3498"/>
<dbReference type="KEGG" id="sfx:S4265"/>
<dbReference type="PATRIC" id="fig|198214.7.peg.4119"/>
<dbReference type="HOGENOM" id="CLU_000604_1_23_6"/>
<dbReference type="Proteomes" id="UP000001006">
    <property type="component" value="Chromosome"/>
</dbReference>
<dbReference type="Proteomes" id="UP000002673">
    <property type="component" value="Chromosome"/>
</dbReference>
<dbReference type="GO" id="GO:0005886">
    <property type="term" value="C:plasma membrane"/>
    <property type="evidence" value="ECO:0007669"/>
    <property type="project" value="UniProtKB-SubCell"/>
</dbReference>
<dbReference type="GO" id="GO:0015413">
    <property type="term" value="F:ABC-type nickel transporter activity"/>
    <property type="evidence" value="ECO:0007669"/>
    <property type="project" value="UniProtKB-EC"/>
</dbReference>
<dbReference type="GO" id="GO:0005524">
    <property type="term" value="F:ATP binding"/>
    <property type="evidence" value="ECO:0007669"/>
    <property type="project" value="UniProtKB-KW"/>
</dbReference>
<dbReference type="GO" id="GO:0016887">
    <property type="term" value="F:ATP hydrolysis activity"/>
    <property type="evidence" value="ECO:0007669"/>
    <property type="project" value="InterPro"/>
</dbReference>
<dbReference type="GO" id="GO:0016151">
    <property type="term" value="F:nickel cation binding"/>
    <property type="evidence" value="ECO:0007669"/>
    <property type="project" value="InterPro"/>
</dbReference>
<dbReference type="CDD" id="cd03257">
    <property type="entry name" value="ABC_NikE_OppD_transporters"/>
    <property type="match status" value="1"/>
</dbReference>
<dbReference type="FunFam" id="3.40.50.300:FF:001020">
    <property type="entry name" value="Nickel import ATP-binding protein NikE"/>
    <property type="match status" value="1"/>
</dbReference>
<dbReference type="Gene3D" id="3.40.50.300">
    <property type="entry name" value="P-loop containing nucleotide triphosphate hydrolases"/>
    <property type="match status" value="1"/>
</dbReference>
<dbReference type="InterPro" id="IPR003593">
    <property type="entry name" value="AAA+_ATPase"/>
</dbReference>
<dbReference type="InterPro" id="IPR050319">
    <property type="entry name" value="ABC_transp_ATP-bind"/>
</dbReference>
<dbReference type="InterPro" id="IPR003439">
    <property type="entry name" value="ABC_transporter-like_ATP-bd"/>
</dbReference>
<dbReference type="InterPro" id="IPR017871">
    <property type="entry name" value="ABC_transporter-like_CS"/>
</dbReference>
<dbReference type="InterPro" id="IPR014137">
    <property type="entry name" value="Nickel_NikE"/>
</dbReference>
<dbReference type="InterPro" id="IPR027417">
    <property type="entry name" value="P-loop_NTPase"/>
</dbReference>
<dbReference type="NCBIfam" id="TIGR02769">
    <property type="entry name" value="nickel_nikE"/>
    <property type="match status" value="1"/>
</dbReference>
<dbReference type="NCBIfam" id="NF007739">
    <property type="entry name" value="PRK10419.1"/>
    <property type="match status" value="1"/>
</dbReference>
<dbReference type="PANTHER" id="PTHR43776:SF7">
    <property type="entry name" value="D,D-DIPEPTIDE TRANSPORT ATP-BINDING PROTEIN DDPF-RELATED"/>
    <property type="match status" value="1"/>
</dbReference>
<dbReference type="PANTHER" id="PTHR43776">
    <property type="entry name" value="TRANSPORT ATP-BINDING PROTEIN"/>
    <property type="match status" value="1"/>
</dbReference>
<dbReference type="Pfam" id="PF00005">
    <property type="entry name" value="ABC_tran"/>
    <property type="match status" value="1"/>
</dbReference>
<dbReference type="SMART" id="SM00382">
    <property type="entry name" value="AAA"/>
    <property type="match status" value="1"/>
</dbReference>
<dbReference type="SUPFAM" id="SSF52540">
    <property type="entry name" value="P-loop containing nucleoside triphosphate hydrolases"/>
    <property type="match status" value="1"/>
</dbReference>
<dbReference type="PROSITE" id="PS00211">
    <property type="entry name" value="ABC_TRANSPORTER_1"/>
    <property type="match status" value="1"/>
</dbReference>
<dbReference type="PROSITE" id="PS50893">
    <property type="entry name" value="ABC_TRANSPORTER_2"/>
    <property type="match status" value="1"/>
</dbReference>
<dbReference type="PROSITE" id="PS51248">
    <property type="entry name" value="NIKE"/>
    <property type="match status" value="1"/>
</dbReference>